<protein>
    <recommendedName>
        <fullName>Small G protein signaling modulator 1</fullName>
    </recommendedName>
    <alternativeName>
        <fullName>RUN and TBC1 domain-containing protein 2</fullName>
    </alternativeName>
</protein>
<accession>Q2NKQ1</accession>
<accession>A5LGW1</accession>
<accession>A8MUT4</accession>
<accession>B0QYW0</accession>
<accession>B0QYW1</accession>
<accession>B5MEG1</accession>
<accession>B9A6J4</accession>
<accession>Q5TFL3</accession>
<accession>Q8TF60</accession>
<reference key="1">
    <citation type="journal article" date="2007" name="Genomics">
        <title>Identification of three novel proteins (SGSM1, 2, 3) which modulate small G protein (RAP and RAB)-mediated signaling pathway.</title>
        <authorList>
            <person name="Yang H."/>
            <person name="Sasaki T."/>
            <person name="Minoshima S."/>
            <person name="Shimizu N."/>
        </authorList>
    </citation>
    <scope>NUCLEOTIDE SEQUENCE [MRNA] (ISOFORM 3)</scope>
    <scope>INTERACTION WITH RAB3A; RAB4A; RAB5A; RAB8A; RAB11A; RAP1A; RAP1B; RAP2A AND RAP2B</scope>
    <scope>TISSUE SPECIFICITY</scope>
    <source>
        <tissue>Brain</tissue>
    </source>
</reference>
<reference key="2">
    <citation type="journal article" date="2009" name="Genes Cells">
        <title>Identification and characterization of a novel Tre-2/Bub2/Cdc16 (TBC) protein that possesses Rab3A-GAP activity.</title>
        <authorList>
            <person name="Ishibashi K."/>
            <person name="Kanno E."/>
            <person name="Itoh T."/>
            <person name="Fukuda M."/>
        </authorList>
    </citation>
    <scope>NUCLEOTIDE SEQUENCE [MRNA] (ISOFORM 2)</scope>
    <source>
        <tissue>Brain</tissue>
    </source>
</reference>
<reference key="3">
    <citation type="journal article" date="2001" name="DNA Res.">
        <title>Prediction of the coding sequences of unidentified human genes. XXII. The complete sequences of 50 new cDNA clones which code for large proteins.</title>
        <authorList>
            <person name="Nagase T."/>
            <person name="Kikuno R."/>
            <person name="Ohara O."/>
        </authorList>
    </citation>
    <scope>NUCLEOTIDE SEQUENCE [LARGE SCALE MRNA] (ISOFORM 2)</scope>
    <source>
        <tissue>Brain</tissue>
    </source>
</reference>
<reference key="4">
    <citation type="journal article" date="1999" name="Nature">
        <title>The DNA sequence of human chromosome 22.</title>
        <authorList>
            <person name="Dunham I."/>
            <person name="Hunt A.R."/>
            <person name="Collins J.E."/>
            <person name="Bruskiewich R."/>
            <person name="Beare D.M."/>
            <person name="Clamp M."/>
            <person name="Smink L.J."/>
            <person name="Ainscough R."/>
            <person name="Almeida J.P."/>
            <person name="Babbage A.K."/>
            <person name="Bagguley C."/>
            <person name="Bailey J."/>
            <person name="Barlow K.F."/>
            <person name="Bates K.N."/>
            <person name="Beasley O.P."/>
            <person name="Bird C.P."/>
            <person name="Blakey S.E."/>
            <person name="Bridgeman A.M."/>
            <person name="Buck D."/>
            <person name="Burgess J."/>
            <person name="Burrill W.D."/>
            <person name="Burton J."/>
            <person name="Carder C."/>
            <person name="Carter N.P."/>
            <person name="Chen Y."/>
            <person name="Clark G."/>
            <person name="Clegg S.M."/>
            <person name="Cobley V.E."/>
            <person name="Cole C.G."/>
            <person name="Collier R.E."/>
            <person name="Connor R."/>
            <person name="Conroy D."/>
            <person name="Corby N.R."/>
            <person name="Coville G.J."/>
            <person name="Cox A.V."/>
            <person name="Davis J."/>
            <person name="Dawson E."/>
            <person name="Dhami P.D."/>
            <person name="Dockree C."/>
            <person name="Dodsworth S.J."/>
            <person name="Durbin R.M."/>
            <person name="Ellington A.G."/>
            <person name="Evans K.L."/>
            <person name="Fey J.M."/>
            <person name="Fleming K."/>
            <person name="French L."/>
            <person name="Garner A.A."/>
            <person name="Gilbert J.G.R."/>
            <person name="Goward M.E."/>
            <person name="Grafham D.V."/>
            <person name="Griffiths M.N.D."/>
            <person name="Hall C."/>
            <person name="Hall R.E."/>
            <person name="Hall-Tamlyn G."/>
            <person name="Heathcott R.W."/>
            <person name="Ho S."/>
            <person name="Holmes S."/>
            <person name="Hunt S.E."/>
            <person name="Jones M.C."/>
            <person name="Kershaw J."/>
            <person name="Kimberley A.M."/>
            <person name="King A."/>
            <person name="Laird G.K."/>
            <person name="Langford C.F."/>
            <person name="Leversha M.A."/>
            <person name="Lloyd C."/>
            <person name="Lloyd D.M."/>
            <person name="Martyn I.D."/>
            <person name="Mashreghi-Mohammadi M."/>
            <person name="Matthews L.H."/>
            <person name="Mccann O.T."/>
            <person name="Mcclay J."/>
            <person name="Mclaren S."/>
            <person name="McMurray A.A."/>
            <person name="Milne S.A."/>
            <person name="Mortimore B.J."/>
            <person name="Odell C.N."/>
            <person name="Pavitt R."/>
            <person name="Pearce A.V."/>
            <person name="Pearson D."/>
            <person name="Phillimore B.J.C.T."/>
            <person name="Phillips S.H."/>
            <person name="Plumb R.W."/>
            <person name="Ramsay H."/>
            <person name="Ramsey Y."/>
            <person name="Rogers L."/>
            <person name="Ross M.T."/>
            <person name="Scott C.E."/>
            <person name="Sehra H.K."/>
            <person name="Skuce C.D."/>
            <person name="Smalley S."/>
            <person name="Smith M.L."/>
            <person name="Soderlund C."/>
            <person name="Spragon L."/>
            <person name="Steward C.A."/>
            <person name="Sulston J.E."/>
            <person name="Swann R.M."/>
            <person name="Vaudin M."/>
            <person name="Wall M."/>
            <person name="Wallis J.M."/>
            <person name="Whiteley M.N."/>
            <person name="Willey D.L."/>
            <person name="Williams L."/>
            <person name="Williams S.A."/>
            <person name="Williamson H."/>
            <person name="Wilmer T.E."/>
            <person name="Wilming L."/>
            <person name="Wright C.L."/>
            <person name="Hubbard T."/>
            <person name="Bentley D.R."/>
            <person name="Beck S."/>
            <person name="Rogers J."/>
            <person name="Shimizu N."/>
            <person name="Minoshima S."/>
            <person name="Kawasaki K."/>
            <person name="Sasaki T."/>
            <person name="Asakawa S."/>
            <person name="Kudoh J."/>
            <person name="Shintani A."/>
            <person name="Shibuya K."/>
            <person name="Yoshizaki Y."/>
            <person name="Aoki N."/>
            <person name="Mitsuyama S."/>
            <person name="Roe B.A."/>
            <person name="Chen F."/>
            <person name="Chu L."/>
            <person name="Crabtree J."/>
            <person name="Deschamps S."/>
            <person name="Do A."/>
            <person name="Do T."/>
            <person name="Dorman A."/>
            <person name="Fang F."/>
            <person name="Fu Y."/>
            <person name="Hu P."/>
            <person name="Hua A."/>
            <person name="Kenton S."/>
            <person name="Lai H."/>
            <person name="Lao H.I."/>
            <person name="Lewis J."/>
            <person name="Lewis S."/>
            <person name="Lin S.-P."/>
            <person name="Loh P."/>
            <person name="Malaj E."/>
            <person name="Nguyen T."/>
            <person name="Pan H."/>
            <person name="Phan S."/>
            <person name="Qi S."/>
            <person name="Qian Y."/>
            <person name="Ray L."/>
            <person name="Ren Q."/>
            <person name="Shaull S."/>
            <person name="Sloan D."/>
            <person name="Song L."/>
            <person name="Wang Q."/>
            <person name="Wang Y."/>
            <person name="Wang Z."/>
            <person name="White J."/>
            <person name="Willingham D."/>
            <person name="Wu H."/>
            <person name="Yao Z."/>
            <person name="Zhan M."/>
            <person name="Zhang G."/>
            <person name="Chissoe S."/>
            <person name="Murray J."/>
            <person name="Miller N."/>
            <person name="Minx P."/>
            <person name="Fulton R."/>
            <person name="Johnson D."/>
            <person name="Bemis G."/>
            <person name="Bentley D."/>
            <person name="Bradshaw H."/>
            <person name="Bourne S."/>
            <person name="Cordes M."/>
            <person name="Du Z."/>
            <person name="Fulton L."/>
            <person name="Goela D."/>
            <person name="Graves T."/>
            <person name="Hawkins J."/>
            <person name="Hinds K."/>
            <person name="Kemp K."/>
            <person name="Latreille P."/>
            <person name="Layman D."/>
            <person name="Ozersky P."/>
            <person name="Rohlfing T."/>
            <person name="Scheet P."/>
            <person name="Walker C."/>
            <person name="Wamsley A."/>
            <person name="Wohldmann P."/>
            <person name="Pepin K."/>
            <person name="Nelson J."/>
            <person name="Korf I."/>
            <person name="Bedell J.A."/>
            <person name="Hillier L.W."/>
            <person name="Mardis E."/>
            <person name="Waterston R."/>
            <person name="Wilson R."/>
            <person name="Emanuel B.S."/>
            <person name="Shaikh T."/>
            <person name="Kurahashi H."/>
            <person name="Saitta S."/>
            <person name="Budarf M.L."/>
            <person name="McDermid H.E."/>
            <person name="Johnson A."/>
            <person name="Wong A.C.C."/>
            <person name="Morrow B.E."/>
            <person name="Edelmann L."/>
            <person name="Kim U.J."/>
            <person name="Shizuya H."/>
            <person name="Simon M.I."/>
            <person name="Dumanski J.P."/>
            <person name="Peyrard M."/>
            <person name="Kedra D."/>
            <person name="Seroussi E."/>
            <person name="Fransson I."/>
            <person name="Tapia I."/>
            <person name="Bruder C.E."/>
            <person name="O'Brien K.P."/>
            <person name="Wilkinson P."/>
            <person name="Bodenteich A."/>
            <person name="Hartman K."/>
            <person name="Hu X."/>
            <person name="Khan A.S."/>
            <person name="Lane L."/>
            <person name="Tilahun Y."/>
            <person name="Wright H."/>
        </authorList>
    </citation>
    <scope>NUCLEOTIDE SEQUENCE [LARGE SCALE GENOMIC DNA]</scope>
</reference>
<reference key="5">
    <citation type="journal article" date="2004" name="Genome Res.">
        <title>The status, quality, and expansion of the NIH full-length cDNA project: the Mammalian Gene Collection (MGC).</title>
        <authorList>
            <consortium name="The MGC Project Team"/>
        </authorList>
    </citation>
    <scope>NUCLEOTIDE SEQUENCE [LARGE SCALE MRNA] OF 1-676 (ISOFORM 1)</scope>
</reference>
<reference key="6">
    <citation type="journal article" date="2012" name="J. Biol. Chem.">
        <title>RUTBC2 protein, a Rab9A effector and GTPase-activating protein for Rab36.</title>
        <authorList>
            <person name="Nottingham R.M."/>
            <person name="Pusapati G.V."/>
            <person name="Ganley I.G."/>
            <person name="Barr F.A."/>
            <person name="Lambright D.G."/>
            <person name="Pfeffer S.R."/>
        </authorList>
    </citation>
    <scope>FUNCTION</scope>
    <scope>INTERACTION WITH RAB9A AND RAB9B</scope>
    <scope>SUBCELLULAR LOCATION</scope>
</reference>
<evidence type="ECO:0000250" key="1">
    <source>
        <dbReference type="UniProtKB" id="Q8BPQ7"/>
    </source>
</evidence>
<evidence type="ECO:0000255" key="2">
    <source>
        <dbReference type="PROSITE-ProRule" id="PRU00163"/>
    </source>
</evidence>
<evidence type="ECO:0000255" key="3">
    <source>
        <dbReference type="PROSITE-ProRule" id="PRU00178"/>
    </source>
</evidence>
<evidence type="ECO:0000256" key="4">
    <source>
        <dbReference type="SAM" id="MobiDB-lite"/>
    </source>
</evidence>
<evidence type="ECO:0000269" key="5">
    <source>
    </source>
</evidence>
<evidence type="ECO:0000269" key="6">
    <source>
    </source>
</evidence>
<evidence type="ECO:0000303" key="7">
    <source>
    </source>
</evidence>
<evidence type="ECO:0000303" key="8">
    <source>
    </source>
</evidence>
<evidence type="ECO:0000303" key="9">
    <source>
    </source>
</evidence>
<evidence type="ECO:0000305" key="10"/>
<proteinExistence type="evidence at protein level"/>
<comment type="function">
    <text evidence="6">Interacts with numerous Rab family members, functioning as Rab effector for some, and as GTPase activator for others. Promotes GTP hydrolysis by RAB34 and RAB36. Probably functions as a GTPase effector with RAB9A and RAB9B; does not stimulate GTP hydrolysis with RAB9A and RAB9B.</text>
</comment>
<comment type="subunit">
    <text evidence="5 6">Interacts with RAB9A (GTP-bound form) and RAB9B (GTP-bound form); has much lower affinity for GDP-bound RAB9A and RAB9B (PubMed:22637480). Interacts with RAB3A, RAB4A, RAB5A, RAB8A, RAB11A, RAP1A, RAP1B, RAP2A and RAP2B. No interaction with RAB27A (PubMed:17509819).</text>
</comment>
<comment type="interaction">
    <interactant intactId="EBI-10743958">
        <id>Q2NKQ1</id>
    </interactant>
    <interactant intactId="EBI-2512818">
        <id>Q12798</id>
        <label>CETN1</label>
    </interactant>
    <organismsDiffer>false</organismsDiffer>
    <experiments>5</experiments>
</comment>
<comment type="interaction">
    <interactant intactId="EBI-10182463">
        <id>Q2NKQ1-4</id>
    </interactant>
    <interactant intactId="EBI-17264467">
        <id>P05067-2</id>
        <label>APP</label>
    </interactant>
    <organismsDiffer>false</organismsDiffer>
    <experiments>3</experiments>
</comment>
<comment type="interaction">
    <interactant intactId="EBI-10182463">
        <id>Q2NKQ1-4</id>
    </interactant>
    <interactant intactId="EBI-11954292">
        <id>Q86V38</id>
        <label>ATN1</label>
    </interactant>
    <organismsDiffer>false</organismsDiffer>
    <experiments>3</experiments>
</comment>
<comment type="interaction">
    <interactant intactId="EBI-10182463">
        <id>Q2NKQ1-4</id>
    </interactant>
    <interactant intactId="EBI-930964">
        <id>P54253</id>
        <label>ATXN1</label>
    </interactant>
    <organismsDiffer>false</organismsDiffer>
    <experiments>6</experiments>
</comment>
<comment type="interaction">
    <interactant intactId="EBI-10182463">
        <id>Q2NKQ1-4</id>
    </interactant>
    <interactant intactId="EBI-2512818">
        <id>Q12798</id>
        <label>CETN1</label>
    </interactant>
    <organismsDiffer>false</organismsDiffer>
    <experiments>7</experiments>
</comment>
<comment type="interaction">
    <interactant intactId="EBI-10182463">
        <id>Q2NKQ1-4</id>
    </interactant>
    <interactant intactId="EBI-1789926">
        <id>P41208</id>
        <label>CETN2</label>
    </interactant>
    <organismsDiffer>false</organismsDiffer>
    <experiments>6</experiments>
</comment>
<comment type="interaction">
    <interactant intactId="EBI-10182463">
        <id>Q2NKQ1-4</id>
    </interactant>
    <interactant intactId="EBI-712959">
        <id>O15182</id>
        <label>CETN3</label>
    </interactant>
    <organismsDiffer>false</organismsDiffer>
    <experiments>6</experiments>
</comment>
<comment type="interaction">
    <interactant intactId="EBI-10182463">
        <id>Q2NKQ1-4</id>
    </interactant>
    <interactant intactId="EBI-6875961">
        <id>P02489</id>
        <label>CRYAA</label>
    </interactant>
    <organismsDiffer>false</organismsDiffer>
    <experiments>3</experiments>
</comment>
<comment type="interaction">
    <interactant intactId="EBI-10182463">
        <id>Q2NKQ1-4</id>
    </interactant>
    <interactant intactId="EBI-10968534">
        <id>P50570-2</id>
        <label>DNM2</label>
    </interactant>
    <organismsDiffer>false</organismsDiffer>
    <experiments>3</experiments>
</comment>
<comment type="interaction">
    <interactant intactId="EBI-10182463">
        <id>Q2NKQ1-4</id>
    </interactant>
    <interactant intactId="EBI-2565863">
        <id>P00488</id>
        <label>F13A1</label>
    </interactant>
    <organismsDiffer>false</organismsDiffer>
    <experiments>3</experiments>
</comment>
<comment type="interaction">
    <interactant intactId="EBI-10182463">
        <id>Q2NKQ1-4</id>
    </interactant>
    <interactant intactId="EBI-25913156">
        <id>O14908-2</id>
        <label>GIPC1</label>
    </interactant>
    <organismsDiffer>false</organismsDiffer>
    <experiments>3</experiments>
</comment>
<comment type="interaction">
    <interactant intactId="EBI-10182463">
        <id>Q2NKQ1-4</id>
    </interactant>
    <interactant intactId="EBI-466029">
        <id>P42858</id>
        <label>HTT</label>
    </interactant>
    <organismsDiffer>false</organismsDiffer>
    <experiments>12</experiments>
</comment>
<comment type="interaction">
    <interactant intactId="EBI-10182463">
        <id>Q2NKQ1-4</id>
    </interactant>
    <interactant intactId="EBI-1246091">
        <id>O43920</id>
        <label>NDUFS5</label>
    </interactant>
    <organismsDiffer>false</organismsDiffer>
    <experiments>3</experiments>
</comment>
<comment type="interaction">
    <interactant intactId="EBI-10182463">
        <id>Q2NKQ1-4</id>
    </interactant>
    <interactant intactId="EBI-748974">
        <id>Q96CV9</id>
        <label>OPTN</label>
    </interactant>
    <organismsDiffer>false</organismsDiffer>
    <experiments>3</experiments>
</comment>
<comment type="interaction">
    <interactant intactId="EBI-10182463">
        <id>Q2NKQ1-4</id>
    </interactant>
    <interactant intactId="EBI-50433196">
        <id>A0A6Q8PF08</id>
        <label>PMP22</label>
    </interactant>
    <organismsDiffer>false</organismsDiffer>
    <experiments>3</experiments>
</comment>
<comment type="interaction">
    <interactant intactId="EBI-10182463">
        <id>Q2NKQ1-4</id>
    </interactant>
    <interactant intactId="EBI-21251460">
        <id>O60260-5</id>
        <label>PRKN</label>
    </interactant>
    <organismsDiffer>false</organismsDiffer>
    <experiments>6</experiments>
</comment>
<comment type="interaction">
    <interactant intactId="EBI-10182463">
        <id>Q2NKQ1-4</id>
    </interactant>
    <interactant intactId="EBI-11047108">
        <id>P49768-2</id>
        <label>PSEN1</label>
    </interactant>
    <organismsDiffer>false</organismsDiffer>
    <experiments>3</experiments>
</comment>
<comment type="interaction">
    <interactant intactId="EBI-10182463">
        <id>Q2NKQ1-4</id>
    </interactant>
    <interactant intactId="EBI-2010251">
        <id>P49810</id>
        <label>PSEN2</label>
    </interactant>
    <organismsDiffer>false</organismsDiffer>
    <experiments>3</experiments>
</comment>
<comment type="interaction">
    <interactant intactId="EBI-10182463">
        <id>Q2NKQ1-4</id>
    </interactant>
    <interactant intactId="EBI-6503765">
        <id>Q8IVP1</id>
        <label>SH3GL3</label>
    </interactant>
    <organismsDiffer>false</organismsDiffer>
    <experiments>3</experiments>
</comment>
<comment type="interaction">
    <interactant intactId="EBI-10182463">
        <id>Q2NKQ1-4</id>
    </interactant>
    <interactant intactId="EBI-395421">
        <id>Q16637</id>
        <label>SMN2</label>
    </interactant>
    <organismsDiffer>false</organismsDiffer>
    <experiments>3</experiments>
</comment>
<comment type="interaction">
    <interactant intactId="EBI-10182463">
        <id>Q2NKQ1-4</id>
    </interactant>
    <interactant intactId="EBI-985879">
        <id>P37840</id>
        <label>SNCA</label>
    </interactant>
    <organismsDiffer>false</organismsDiffer>
    <experiments>3</experiments>
</comment>
<comment type="interaction">
    <interactant intactId="EBI-10182463">
        <id>Q2NKQ1-4</id>
    </interactant>
    <interactant intactId="EBI-990792">
        <id>P00441</id>
        <label>SOD1</label>
    </interactant>
    <organismsDiffer>false</organismsDiffer>
    <experiments>3</experiments>
</comment>
<comment type="subcellular location">
    <subcellularLocation>
        <location evidence="1">Golgi apparatus</location>
        <location evidence="1">trans-Golgi network</location>
    </subcellularLocation>
    <subcellularLocation>
        <location evidence="6">Cytoplasmic vesicle membrane</location>
        <topology evidence="6">Peripheral membrane protein</topology>
    </subcellularLocation>
    <subcellularLocation>
        <location evidence="6">Cytoplasm</location>
    </subcellularLocation>
    <text evidence="6">Recruited to cytoplasmic vesicle membranes via its interaction with Rab family members, such as RAB9A.</text>
</comment>
<comment type="alternative products">
    <event type="alternative splicing"/>
    <isoform>
        <id>Q2NKQ1-1</id>
        <name>1</name>
        <sequence type="displayed"/>
    </isoform>
    <isoform>
        <id>Q2NKQ1-3</id>
        <name>2</name>
        <sequence type="described" ref="VSP_024665 VSP_024666 VSP_024667 VSP_024668"/>
    </isoform>
    <isoform>
        <id>Q2NKQ1-4</id>
        <name>3</name>
        <sequence type="described" ref="VSP_024667"/>
    </isoform>
</comment>
<comment type="tissue specificity">
    <text evidence="5">Mainly expressed in brain, heart and testis.</text>
</comment>
<comment type="similarity">
    <text evidence="10">Belongs to the RUTBC family.</text>
</comment>
<comment type="sequence caution" evidence="10">
    <conflict type="erroneous initiation">
        <sequence resource="EMBL-CDS" id="BAB85527"/>
    </conflict>
</comment>
<gene>
    <name type="primary">SGSM1</name>
    <name type="synonym">KIAA1941</name>
    <name type="synonym">RUTBC2</name>
</gene>
<keyword id="KW-0025">Alternative splicing</keyword>
<keyword id="KW-0963">Cytoplasm</keyword>
<keyword id="KW-0968">Cytoplasmic vesicle</keyword>
<keyword id="KW-0333">Golgi apparatus</keyword>
<keyword id="KW-0343">GTPase activation</keyword>
<keyword id="KW-0472">Membrane</keyword>
<keyword id="KW-1267">Proteomics identification</keyword>
<keyword id="KW-1185">Reference proteome</keyword>
<sequence>MASAPAEAETRQRLLRTVKKEVKQIMEEAVTRKFVHEDSSHIISFCAAVEACVLHGLRRRAAGFLRSNKIAALFMKVGKNFPPAEDLSRKVQDLEQLIESARNQIQGLQENVRKLPKLPNLSPLAIKHLWIRTALFEKVLDKIVHYLVENSSKYYEKEALLMDPVDGPILASLLVGPCALEYTKMKTADHFWTDPSADELVQRHRIHSSHVRQDSPTKRPALCIQKRHSSGSMDDRPSLSARDYVESLHQNSRATLLYGKNNVLVQPRDDMEAVPGYLSLHQTADVMTLKWTPNQLMNGSVGDLDYEKSVYWDYAMTIRLEEIVYLHCHQQVDSGGTVVLVSQDGIQRPPFRFPKGGHLLQFLSCLENGLLPHGQLDPPLWSQRGKGKVFPKLRKRSPQGSAESTSSDKDDDEATDYVFRIIYPGMQSEFVAPDFLGSTSSVSVGPAWMMVPAGRSMLVVARGSQWEPARWDTTLPTPSPKEQPPMPQDLMDVSVSNLPSLWQPSPRKSSCSSCSQSGSADGSSTNGCNHERAPLKLLCDNMKYQILSRAFYGWLAYCRHLSTVRTHLSALVNHMIVSPDLPCDAGQGLTARIWEQYLHDSTSYEEQELLRLIYYGGIQPEIRKAVWPFLLGHYQFGMTETERKEVDEQIHACYAQTMAEWLGCEAIVRQRERESHAAALAKCSSGASLDSHLHRMLHRDSTISNESSQSCSSGRQNIRLHSDSSSSTQVFESVDEVEQVEAEGRLEEKQPKIPNGNLVNGTCSPDSGHPSSHNFSSGLSEHSEPSLSTEDSVLDAQRNTPTVLRPRDGSVDDRQSSEATTSQDEAPREELAVQDSLESDLLANESMDEFMSITGSLDMALPEKDDVVMEGWRSSETEKHGQADSEDNLSEEPEMESLFPALASLAVTTSANEVSPVSSSGVTYSPELLDLYTVNLHRIEKDVQRCDRNYWYFTPANLEKLRNIMCSYIWQHIEIGYVQGMCDLLAPLLVILDDEALAFSCFTELMKRMNQNFPHGGAMDTHFANMRSLIQILDSELFELMHQNGDYTHFYFCYRWFLLDFKRELVYDDVFLVWETIWAAKHVSSAHYVLFIALALVEVYRDIILENNMDFTDIIKFFNEMAERHNTKQVLKLARDLVYKVQTLIENK</sequence>
<dbReference type="EMBL" id="AB275761">
    <property type="protein sequence ID" value="BAF63511.1"/>
    <property type="molecule type" value="mRNA"/>
</dbReference>
<dbReference type="EMBL" id="AB449879">
    <property type="protein sequence ID" value="BAH16622.1"/>
    <property type="molecule type" value="mRNA"/>
</dbReference>
<dbReference type="EMBL" id="AB075821">
    <property type="protein sequence ID" value="BAB85527.1"/>
    <property type="status" value="ALT_INIT"/>
    <property type="molecule type" value="mRNA"/>
</dbReference>
<dbReference type="EMBL" id="AL049759">
    <property type="status" value="NOT_ANNOTATED_CDS"/>
    <property type="molecule type" value="Genomic_DNA"/>
</dbReference>
<dbReference type="EMBL" id="AP000359">
    <property type="status" value="NOT_ANNOTATED_CDS"/>
    <property type="molecule type" value="Genomic_DNA"/>
</dbReference>
<dbReference type="EMBL" id="BC036915">
    <property type="status" value="NOT_ANNOTATED_CDS"/>
    <property type="molecule type" value="mRNA"/>
</dbReference>
<dbReference type="CCDS" id="CCDS46674.1">
    <molecule id="Q2NKQ1-1"/>
</dbReference>
<dbReference type="CCDS" id="CCDS46675.1">
    <molecule id="Q2NKQ1-4"/>
</dbReference>
<dbReference type="RefSeq" id="NP_001035037.1">
    <molecule id="Q2NKQ1-1"/>
    <property type="nucleotide sequence ID" value="NM_001039948.4"/>
</dbReference>
<dbReference type="RefSeq" id="NP_001091967.1">
    <molecule id="Q2NKQ1-4"/>
    <property type="nucleotide sequence ID" value="NM_001098497.3"/>
</dbReference>
<dbReference type="RefSeq" id="NP_001091968.1">
    <property type="nucleotide sequence ID" value="NM_001098498.2"/>
</dbReference>
<dbReference type="RefSeq" id="NP_597711.1">
    <property type="nucleotide sequence ID" value="NM_133454.3"/>
</dbReference>
<dbReference type="SMR" id="Q2NKQ1"/>
<dbReference type="BioGRID" id="126182">
    <property type="interactions" value="12"/>
</dbReference>
<dbReference type="FunCoup" id="Q2NKQ1">
    <property type="interactions" value="817"/>
</dbReference>
<dbReference type="IntAct" id="Q2NKQ1">
    <property type="interactions" value="27"/>
</dbReference>
<dbReference type="STRING" id="9606.ENSP00000383212"/>
<dbReference type="CarbonylDB" id="Q2NKQ1"/>
<dbReference type="GlyGen" id="Q2NKQ1">
    <property type="glycosylation" value="1 site"/>
</dbReference>
<dbReference type="iPTMnet" id="Q2NKQ1"/>
<dbReference type="PhosphoSitePlus" id="Q2NKQ1"/>
<dbReference type="SwissPalm" id="Q2NKQ1"/>
<dbReference type="BioMuta" id="SGSM1"/>
<dbReference type="DMDM" id="145566945"/>
<dbReference type="jPOST" id="Q2NKQ1"/>
<dbReference type="MassIVE" id="Q2NKQ1"/>
<dbReference type="PaxDb" id="9606-ENSP00000383212"/>
<dbReference type="PeptideAtlas" id="Q2NKQ1"/>
<dbReference type="ProteomicsDB" id="61410">
    <molecule id="Q2NKQ1-1"/>
</dbReference>
<dbReference type="ProteomicsDB" id="61411">
    <molecule id="Q2NKQ1-3"/>
</dbReference>
<dbReference type="ProteomicsDB" id="61412">
    <molecule id="Q2NKQ1-4"/>
</dbReference>
<dbReference type="Antibodypedia" id="308">
    <property type="antibodies" value="83 antibodies from 26 providers"/>
</dbReference>
<dbReference type="DNASU" id="129049"/>
<dbReference type="Ensembl" id="ENST00000400358.9">
    <molecule id="Q2NKQ1-4"/>
    <property type="protein sequence ID" value="ENSP00000383211.4"/>
    <property type="gene ID" value="ENSG00000167037.19"/>
</dbReference>
<dbReference type="Ensembl" id="ENST00000400359.4">
    <molecule id="Q2NKQ1-1"/>
    <property type="protein sequence ID" value="ENSP00000383212.4"/>
    <property type="gene ID" value="ENSG00000167037.19"/>
</dbReference>
<dbReference type="GeneID" id="129049"/>
<dbReference type="KEGG" id="hsa:129049"/>
<dbReference type="MANE-Select" id="ENST00000400358.9">
    <molecule id="Q2NKQ1-4"/>
    <property type="protein sequence ID" value="ENSP00000383211.4"/>
    <property type="RefSeq nucleotide sequence ID" value="NM_001098497.3"/>
    <property type="RefSeq protein sequence ID" value="NP_001091967.1"/>
</dbReference>
<dbReference type="UCSC" id="uc003abg.3">
    <molecule id="Q2NKQ1-1"/>
    <property type="organism name" value="human"/>
</dbReference>
<dbReference type="AGR" id="HGNC:29410"/>
<dbReference type="CTD" id="129049"/>
<dbReference type="DisGeNET" id="129049"/>
<dbReference type="GeneCards" id="SGSM1"/>
<dbReference type="HGNC" id="HGNC:29410">
    <property type="gene designation" value="SGSM1"/>
</dbReference>
<dbReference type="HPA" id="ENSG00000167037">
    <property type="expression patterns" value="Tissue enhanced (brain, heart muscle)"/>
</dbReference>
<dbReference type="MIM" id="611417">
    <property type="type" value="gene"/>
</dbReference>
<dbReference type="neXtProt" id="NX_Q2NKQ1"/>
<dbReference type="OpenTargets" id="ENSG00000167037"/>
<dbReference type="PharmGKB" id="PA162403086"/>
<dbReference type="VEuPathDB" id="HostDB:ENSG00000167037"/>
<dbReference type="eggNOG" id="KOG1648">
    <property type="taxonomic scope" value="Eukaryota"/>
</dbReference>
<dbReference type="GeneTree" id="ENSGT00940000156871"/>
<dbReference type="HOGENOM" id="CLU_006235_0_0_1"/>
<dbReference type="InParanoid" id="Q2NKQ1"/>
<dbReference type="OMA" id="LWPKSMR"/>
<dbReference type="OrthoDB" id="10264062at2759"/>
<dbReference type="PAN-GO" id="Q2NKQ1">
    <property type="GO annotations" value="2 GO annotations based on evolutionary models"/>
</dbReference>
<dbReference type="PhylomeDB" id="Q2NKQ1"/>
<dbReference type="TreeFam" id="TF318216"/>
<dbReference type="PathwayCommons" id="Q2NKQ1"/>
<dbReference type="SignaLink" id="Q2NKQ1"/>
<dbReference type="BioGRID-ORCS" id="129049">
    <property type="hits" value="9 hits in 1136 CRISPR screens"/>
</dbReference>
<dbReference type="CD-CODE" id="FB4E32DD">
    <property type="entry name" value="Presynaptic clusters and postsynaptic densities"/>
</dbReference>
<dbReference type="ChiTaRS" id="SGSM1">
    <property type="organism name" value="human"/>
</dbReference>
<dbReference type="GeneWiki" id="SGSM1"/>
<dbReference type="GenomeRNAi" id="129049"/>
<dbReference type="Pharos" id="Q2NKQ1">
    <property type="development level" value="Tbio"/>
</dbReference>
<dbReference type="PRO" id="PR:Q2NKQ1"/>
<dbReference type="Proteomes" id="UP000005640">
    <property type="component" value="Chromosome 22"/>
</dbReference>
<dbReference type="RNAct" id="Q2NKQ1">
    <property type="molecule type" value="protein"/>
</dbReference>
<dbReference type="Bgee" id="ENSG00000167037">
    <property type="expression patterns" value="Expressed in cardiac muscle of right atrium and 139 other cell types or tissues"/>
</dbReference>
<dbReference type="ExpressionAtlas" id="Q2NKQ1">
    <property type="expression patterns" value="baseline and differential"/>
</dbReference>
<dbReference type="GO" id="GO:0005737">
    <property type="term" value="C:cytoplasm"/>
    <property type="evidence" value="ECO:0000250"/>
    <property type="project" value="UniProtKB"/>
</dbReference>
<dbReference type="GO" id="GO:0030659">
    <property type="term" value="C:cytoplasmic vesicle membrane"/>
    <property type="evidence" value="ECO:0000314"/>
    <property type="project" value="UniProtKB"/>
</dbReference>
<dbReference type="GO" id="GO:0005829">
    <property type="term" value="C:cytosol"/>
    <property type="evidence" value="ECO:0000314"/>
    <property type="project" value="UniProtKB"/>
</dbReference>
<dbReference type="GO" id="GO:0005794">
    <property type="term" value="C:Golgi apparatus"/>
    <property type="evidence" value="ECO:0007669"/>
    <property type="project" value="UniProtKB-SubCell"/>
</dbReference>
<dbReference type="GO" id="GO:0005096">
    <property type="term" value="F:GTPase activator activity"/>
    <property type="evidence" value="ECO:0000314"/>
    <property type="project" value="UniProtKB"/>
</dbReference>
<dbReference type="GO" id="GO:0031267">
    <property type="term" value="F:small GTPase binding"/>
    <property type="evidence" value="ECO:0000353"/>
    <property type="project" value="UniProtKB"/>
</dbReference>
<dbReference type="CDD" id="cd15784">
    <property type="entry name" value="PH_RUTBC"/>
    <property type="match status" value="1"/>
</dbReference>
<dbReference type="CDD" id="cd17703">
    <property type="entry name" value="RUN_SGSM1"/>
    <property type="match status" value="1"/>
</dbReference>
<dbReference type="FunFam" id="1.10.472.80:FF:000004">
    <property type="entry name" value="Small G protein signaling modulator 1"/>
    <property type="match status" value="1"/>
</dbReference>
<dbReference type="FunFam" id="1.20.58.900:FF:000002">
    <property type="entry name" value="small G protein signaling modulator 1"/>
    <property type="match status" value="1"/>
</dbReference>
<dbReference type="FunFam" id="1.10.8.270:FF:000006">
    <property type="entry name" value="Small G protein signaling modulator 2"/>
    <property type="match status" value="1"/>
</dbReference>
<dbReference type="FunFam" id="2.30.29.230:FF:000001">
    <property type="entry name" value="Small G protein signaling modulator 2"/>
    <property type="match status" value="1"/>
</dbReference>
<dbReference type="Gene3D" id="1.20.58.900">
    <property type="match status" value="1"/>
</dbReference>
<dbReference type="Gene3D" id="2.30.29.230">
    <property type="match status" value="1"/>
</dbReference>
<dbReference type="Gene3D" id="1.10.8.270">
    <property type="entry name" value="putative rabgap domain of human tbc1 domain family member 14 like domains"/>
    <property type="match status" value="1"/>
</dbReference>
<dbReference type="Gene3D" id="1.10.472.80">
    <property type="entry name" value="Ypt/Rab-GAP domain of gyp1p, domain 3"/>
    <property type="match status" value="1"/>
</dbReference>
<dbReference type="InterPro" id="IPR000195">
    <property type="entry name" value="Rab-GAP-TBC_dom"/>
</dbReference>
<dbReference type="InterPro" id="IPR035969">
    <property type="entry name" value="Rab-GAP_TBC_sf"/>
</dbReference>
<dbReference type="InterPro" id="IPR004012">
    <property type="entry name" value="Run_dom"/>
</dbReference>
<dbReference type="InterPro" id="IPR037213">
    <property type="entry name" value="Run_dom_sf"/>
</dbReference>
<dbReference type="InterPro" id="IPR047344">
    <property type="entry name" value="RUN_SGSM1"/>
</dbReference>
<dbReference type="InterPro" id="IPR037745">
    <property type="entry name" value="SGSM1/2"/>
</dbReference>
<dbReference type="InterPro" id="IPR021935">
    <property type="entry name" value="SGSM1/2_RBD"/>
</dbReference>
<dbReference type="PANTHER" id="PTHR22957:SF187">
    <property type="entry name" value="SMALL G PROTEIN SIGNALING MODULATOR 1"/>
    <property type="match status" value="1"/>
</dbReference>
<dbReference type="PANTHER" id="PTHR22957">
    <property type="entry name" value="TBC1 DOMAIN FAMILY MEMBER GTPASE-ACTIVATING PROTEIN"/>
    <property type="match status" value="1"/>
</dbReference>
<dbReference type="Pfam" id="PF12068">
    <property type="entry name" value="PH_RBD"/>
    <property type="match status" value="1"/>
</dbReference>
<dbReference type="Pfam" id="PF00566">
    <property type="entry name" value="RabGAP-TBC"/>
    <property type="match status" value="1"/>
</dbReference>
<dbReference type="Pfam" id="PF02759">
    <property type="entry name" value="RUN"/>
    <property type="match status" value="1"/>
</dbReference>
<dbReference type="SMART" id="SM00593">
    <property type="entry name" value="RUN"/>
    <property type="match status" value="1"/>
</dbReference>
<dbReference type="SMART" id="SM00164">
    <property type="entry name" value="TBC"/>
    <property type="match status" value="1"/>
</dbReference>
<dbReference type="SUPFAM" id="SSF140741">
    <property type="entry name" value="RUN domain-like"/>
    <property type="match status" value="1"/>
</dbReference>
<dbReference type="SUPFAM" id="SSF47923">
    <property type="entry name" value="Ypt/Rab-GAP domain of gyp1p"/>
    <property type="match status" value="2"/>
</dbReference>
<dbReference type="PROSITE" id="PS50826">
    <property type="entry name" value="RUN"/>
    <property type="match status" value="1"/>
</dbReference>
<dbReference type="PROSITE" id="PS50086">
    <property type="entry name" value="TBC_RABGAP"/>
    <property type="match status" value="1"/>
</dbReference>
<organism>
    <name type="scientific">Homo sapiens</name>
    <name type="common">Human</name>
    <dbReference type="NCBI Taxonomy" id="9606"/>
    <lineage>
        <taxon>Eukaryota</taxon>
        <taxon>Metazoa</taxon>
        <taxon>Chordata</taxon>
        <taxon>Craniata</taxon>
        <taxon>Vertebrata</taxon>
        <taxon>Euteleostomi</taxon>
        <taxon>Mammalia</taxon>
        <taxon>Eutheria</taxon>
        <taxon>Euarchontoglires</taxon>
        <taxon>Primates</taxon>
        <taxon>Haplorrhini</taxon>
        <taxon>Catarrhini</taxon>
        <taxon>Hominidae</taxon>
        <taxon>Homo</taxon>
    </lineage>
</organism>
<feature type="chain" id="PRO_0000284833" description="Small G protein signaling modulator 1">
    <location>
        <begin position="1"/>
        <end position="1148"/>
    </location>
</feature>
<feature type="domain" description="RUN" evidence="3">
    <location>
        <begin position="36"/>
        <end position="190"/>
    </location>
</feature>
<feature type="domain" description="Rab-GAP TBC" evidence="2">
    <location>
        <begin position="617"/>
        <end position="1081"/>
    </location>
</feature>
<feature type="region of interest" description="Important for interaction with RAB9A and RAB9B" evidence="1">
    <location>
        <begin position="256"/>
        <end position="297"/>
    </location>
</feature>
<feature type="region of interest" description="Required for interaction with RAP family members">
    <location>
        <begin position="301"/>
        <end position="350"/>
    </location>
</feature>
<feature type="region of interest" description="Disordered" evidence="4">
    <location>
        <begin position="377"/>
        <end position="411"/>
    </location>
</feature>
<feature type="region of interest" description="Disordered" evidence="4">
    <location>
        <begin position="700"/>
        <end position="830"/>
    </location>
</feature>
<feature type="region of interest" description="Disordered" evidence="4">
    <location>
        <begin position="871"/>
        <end position="894"/>
    </location>
</feature>
<feature type="compositionally biased region" description="Basic residues" evidence="4">
    <location>
        <begin position="385"/>
        <end position="397"/>
    </location>
</feature>
<feature type="compositionally biased region" description="Polar residues" evidence="4">
    <location>
        <begin position="702"/>
        <end position="716"/>
    </location>
</feature>
<feature type="compositionally biased region" description="Basic and acidic residues" evidence="4">
    <location>
        <begin position="742"/>
        <end position="751"/>
    </location>
</feature>
<feature type="compositionally biased region" description="Polar residues" evidence="4">
    <location>
        <begin position="757"/>
        <end position="802"/>
    </location>
</feature>
<feature type="compositionally biased region" description="Basic and acidic residues" evidence="4">
    <location>
        <begin position="805"/>
        <end position="816"/>
    </location>
</feature>
<feature type="compositionally biased region" description="Basic and acidic residues" evidence="4">
    <location>
        <begin position="871"/>
        <end position="883"/>
    </location>
</feature>
<feature type="compositionally biased region" description="Acidic residues" evidence="4">
    <location>
        <begin position="884"/>
        <end position="894"/>
    </location>
</feature>
<feature type="splice variant" id="VSP_024665" description="In isoform 2." evidence="7 9">
    <location>
        <begin position="1"/>
        <end position="25"/>
    </location>
</feature>
<feature type="splice variant" id="VSP_024666" description="In isoform 2." evidence="7 9">
    <original>T</original>
    <variation>TALFEKVLDKIVHYLVENSSKYYEKEALLMDPVDGPILASLLVGPCALEYTKMKTADHFWTDPSADELVQRHRIHSSHVRQDSPTKRPALCIQKRHSSGSMDDRPSLSARDYVESLHQNSRATLLYGKNNVLVQPRDDMEAVPGYLSLHQTADVMTLKS</variation>
    <location>
        <position position="133"/>
    </location>
</feature>
<feature type="splice variant" id="VSP_024667" description="In isoform 2 and isoform 3." evidence="7 8 9">
    <location>
        <begin position="432"/>
        <end position="486"/>
    </location>
</feature>
<feature type="splice variant" id="VSP_024668" description="In isoform 2." evidence="7 9">
    <location>
        <begin position="645"/>
        <end position="705"/>
    </location>
</feature>
<feature type="sequence variant" id="VAR_031834" description="In dbSNP:rs6004350.">
    <original>T</original>
    <variation>P</variation>
    <location>
        <position position="802"/>
    </location>
</feature>
<feature type="sequence variant" id="VAR_031835" description="In dbSNP:rs2073201.">
    <original>R</original>
    <variation>K</variation>
    <location>
        <position position="873"/>
    </location>
</feature>
<name>SGSM1_HUMAN</name>